<gene>
    <name evidence="3" type="primary">FMO2</name>
</gene>
<sequence length="535" mass="60903">MAKKVAVIGAGVSGLISLKCCVDEGLEPTCFERTEDIGGVWRFKENVEDGRASIYQSVITNTSKEMSCFSDFPMPEDFPNFLHNSKLLEYFRIFAKKFDLLKYIQFQTTVLSVRKCPDFSSSGQWKVVTQSNGKEQSAVFDAVMVCSGHHILPHIPLKSFPGIERFKGQYFHSRQYKHPDGFEGKRILVIGMGNSGSDIAVELSKNAAQVFISTRHGTWVMSRISEDGYPWDSVFHTRFRSMLRNVLPRTAVKWMIEQQMNRWFNHENYGLEPQNKYIMKEPVLNDDVPSRLLCGAIKVKSTVKELTETSAIFEDGTVEENIDVIIFATGYSFSFPFLEDSLVKVENNMVSLYKYIFPAHLDKSTLACIGLIQPLGSIFPTAELQARWVTRVFKGLCSLPSERTMMMDIIKRNEKRIDLFGESQSQTLQTNYVDYLDELALEIGAKPDFCSLLFKDPKLAVRLYFGPCNSYQYRLVGPGQWEGARNAIFTQKQRILKPLKTRALKDSSNFSVSFLLKILGLLAVVVAFFCQLQWS</sequence>
<feature type="initiator methionine" description="Removed" evidence="2">
    <location>
        <position position="1"/>
    </location>
</feature>
<feature type="chain" id="PRO_0000147649" description="Dimethylaniline monooxygenase [N-oxide-forming] 2">
    <location>
        <begin position="2"/>
        <end position="535"/>
    </location>
</feature>
<feature type="transmembrane region" description="Helical" evidence="5">
    <location>
        <begin position="510"/>
        <end position="530"/>
    </location>
</feature>
<feature type="binding site" evidence="4">
    <location>
        <begin position="9"/>
        <end position="13"/>
    </location>
    <ligand>
        <name>FAD</name>
        <dbReference type="ChEBI" id="CHEBI:57692"/>
    </ligand>
</feature>
<feature type="binding site" evidence="4">
    <location>
        <position position="32"/>
    </location>
    <ligand>
        <name>FAD</name>
        <dbReference type="ChEBI" id="CHEBI:57692"/>
    </ligand>
</feature>
<feature type="binding site" evidence="4">
    <location>
        <begin position="40"/>
        <end position="41"/>
    </location>
    <ligand>
        <name>FAD</name>
        <dbReference type="ChEBI" id="CHEBI:57692"/>
    </ligand>
</feature>
<feature type="binding site" evidence="4">
    <location>
        <begin position="60"/>
        <end position="61"/>
    </location>
    <ligand>
        <name>NADP(+)</name>
        <dbReference type="ChEBI" id="CHEBI:58349"/>
    </ligand>
</feature>
<feature type="binding site" evidence="4">
    <location>
        <begin position="61"/>
        <end position="62"/>
    </location>
    <ligand>
        <name>FAD</name>
        <dbReference type="ChEBI" id="CHEBI:57692"/>
    </ligand>
</feature>
<feature type="binding site" evidence="4">
    <location>
        <begin position="195"/>
        <end position="198"/>
    </location>
    <ligand>
        <name>NADP(+)</name>
        <dbReference type="ChEBI" id="CHEBI:58349"/>
    </ligand>
</feature>
<feature type="modified residue" description="N-acetylalanine" evidence="2">
    <location>
        <position position="2"/>
    </location>
</feature>
<feature type="cross-link" description="Glycyl lysine isopeptide (Lys-Gly) (interchain with G-Cter in SUMO)" evidence="3">
    <location>
        <position position="492"/>
    </location>
</feature>
<name>FMO2_PANTR</name>
<evidence type="ECO:0000250" key="1"/>
<evidence type="ECO:0000250" key="2">
    <source>
        <dbReference type="UniProtKB" id="P17635"/>
    </source>
</evidence>
<evidence type="ECO:0000250" key="3">
    <source>
        <dbReference type="UniProtKB" id="Q99518"/>
    </source>
</evidence>
<evidence type="ECO:0000250" key="4">
    <source>
        <dbReference type="UniProtKB" id="Q9HFE4"/>
    </source>
</evidence>
<evidence type="ECO:0000255" key="5"/>
<evidence type="ECO:0000305" key="6"/>
<accession>Q8HZ70</accession>
<keyword id="KW-0007">Acetylation</keyword>
<keyword id="KW-0256">Endoplasmic reticulum</keyword>
<keyword id="KW-0274">FAD</keyword>
<keyword id="KW-0285">Flavoprotein</keyword>
<keyword id="KW-1017">Isopeptide bond</keyword>
<keyword id="KW-0460">Magnesium</keyword>
<keyword id="KW-0472">Membrane</keyword>
<keyword id="KW-0492">Microsome</keyword>
<keyword id="KW-0503">Monooxygenase</keyword>
<keyword id="KW-0521">NADP</keyword>
<keyword id="KW-0560">Oxidoreductase</keyword>
<keyword id="KW-1185">Reference proteome</keyword>
<keyword id="KW-0812">Transmembrane</keyword>
<keyword id="KW-1133">Transmembrane helix</keyword>
<keyword id="KW-0832">Ubl conjugation</keyword>
<protein>
    <recommendedName>
        <fullName evidence="3">Dimethylaniline monooxygenase [N-oxide-forming] 2</fullName>
        <ecNumber evidence="3">1.14.13.-</ecNumber>
    </recommendedName>
    <alternativeName>
        <fullName>Dimethylaniline oxidase 2</fullName>
    </alternativeName>
    <alternativeName>
        <fullName>FMO 1B1</fullName>
    </alternativeName>
    <alternativeName>
        <fullName>Pulmonary flavin-containing monooxygenase 2</fullName>
        <shortName>FMO 2</shortName>
    </alternativeName>
</protein>
<dbReference type="EC" id="1.14.13.-" evidence="3"/>
<dbReference type="EMBL" id="AY132298">
    <property type="protein sequence ID" value="AAN06319.1"/>
    <property type="molecule type" value="Genomic_DNA"/>
</dbReference>
<dbReference type="EMBL" id="AY132291">
    <property type="protein sequence ID" value="AAN06319.1"/>
    <property type="status" value="JOINED"/>
    <property type="molecule type" value="Genomic_DNA"/>
</dbReference>
<dbReference type="EMBL" id="AY132292">
    <property type="protein sequence ID" value="AAN06319.1"/>
    <property type="status" value="JOINED"/>
    <property type="molecule type" value="Genomic_DNA"/>
</dbReference>
<dbReference type="EMBL" id="AY132293">
    <property type="protein sequence ID" value="AAN06319.1"/>
    <property type="status" value="JOINED"/>
    <property type="molecule type" value="Genomic_DNA"/>
</dbReference>
<dbReference type="EMBL" id="AY132294">
    <property type="protein sequence ID" value="AAN06319.1"/>
    <property type="status" value="JOINED"/>
    <property type="molecule type" value="Genomic_DNA"/>
</dbReference>
<dbReference type="EMBL" id="AY132295">
    <property type="protein sequence ID" value="AAN06319.1"/>
    <property type="status" value="JOINED"/>
    <property type="molecule type" value="Genomic_DNA"/>
</dbReference>
<dbReference type="EMBL" id="AY132296">
    <property type="protein sequence ID" value="AAN06319.1"/>
    <property type="status" value="JOINED"/>
    <property type="molecule type" value="Genomic_DNA"/>
</dbReference>
<dbReference type="EMBL" id="AY132297">
    <property type="protein sequence ID" value="AAN06319.1"/>
    <property type="status" value="JOINED"/>
    <property type="molecule type" value="Genomic_DNA"/>
</dbReference>
<dbReference type="RefSeq" id="NP_001009008.1">
    <property type="nucleotide sequence ID" value="NM_001009008.2"/>
</dbReference>
<dbReference type="SMR" id="Q8HZ70"/>
<dbReference type="FunCoup" id="Q8HZ70">
    <property type="interactions" value="115"/>
</dbReference>
<dbReference type="STRING" id="9598.ENSPTRP00000002780"/>
<dbReference type="PaxDb" id="9598-ENSPTRP00000002780"/>
<dbReference type="Ensembl" id="ENSPTRT00000003028.5">
    <property type="protein sequence ID" value="ENSPTRP00000002780.4"/>
    <property type="gene ID" value="ENSPTRG00000001672.5"/>
</dbReference>
<dbReference type="GeneID" id="449587"/>
<dbReference type="KEGG" id="ptr:449587"/>
<dbReference type="CTD" id="2327"/>
<dbReference type="VGNC" id="VGNC:543">
    <property type="gene designation" value="FMO2"/>
</dbReference>
<dbReference type="eggNOG" id="KOG1399">
    <property type="taxonomic scope" value="Eukaryota"/>
</dbReference>
<dbReference type="GeneTree" id="ENSGT00940000161099"/>
<dbReference type="HOGENOM" id="CLU_006909_8_2_1"/>
<dbReference type="InParanoid" id="Q8HZ70"/>
<dbReference type="OMA" id="CTGHHFL"/>
<dbReference type="OrthoDB" id="1240at9604"/>
<dbReference type="TreeFam" id="TF105285"/>
<dbReference type="Proteomes" id="UP000002277">
    <property type="component" value="Chromosome 1"/>
</dbReference>
<dbReference type="Bgee" id="ENSPTRG00000001672">
    <property type="expression patterns" value="Expressed in lung and 13 other cell types or tissues"/>
</dbReference>
<dbReference type="GO" id="GO:0005789">
    <property type="term" value="C:endoplasmic reticulum membrane"/>
    <property type="evidence" value="ECO:0007669"/>
    <property type="project" value="UniProtKB-SubCell"/>
</dbReference>
<dbReference type="GO" id="GO:0016020">
    <property type="term" value="C:membrane"/>
    <property type="evidence" value="ECO:0000250"/>
    <property type="project" value="UniProtKB"/>
</dbReference>
<dbReference type="GO" id="GO:0050660">
    <property type="term" value="F:flavin adenine dinucleotide binding"/>
    <property type="evidence" value="ECO:0007669"/>
    <property type="project" value="InterPro"/>
</dbReference>
<dbReference type="GO" id="GO:0004499">
    <property type="term" value="F:N,N-dimethylaniline monooxygenase activity"/>
    <property type="evidence" value="ECO:0000318"/>
    <property type="project" value="GO_Central"/>
</dbReference>
<dbReference type="GO" id="GO:0050661">
    <property type="term" value="F:NADP binding"/>
    <property type="evidence" value="ECO:0007669"/>
    <property type="project" value="InterPro"/>
</dbReference>
<dbReference type="GO" id="GO:0097009">
    <property type="term" value="P:energy homeostasis"/>
    <property type="evidence" value="ECO:0007669"/>
    <property type="project" value="Ensembl"/>
</dbReference>
<dbReference type="GO" id="GO:0006739">
    <property type="term" value="P:NADP metabolic process"/>
    <property type="evidence" value="ECO:0007669"/>
    <property type="project" value="Ensembl"/>
</dbReference>
<dbReference type="GO" id="GO:0046322">
    <property type="term" value="P:negative regulation of fatty acid oxidation"/>
    <property type="evidence" value="ECO:0007669"/>
    <property type="project" value="Ensembl"/>
</dbReference>
<dbReference type="GO" id="GO:0006082">
    <property type="term" value="P:organic acid metabolic process"/>
    <property type="evidence" value="ECO:0007669"/>
    <property type="project" value="Ensembl"/>
</dbReference>
<dbReference type="GO" id="GO:0072592">
    <property type="term" value="P:oxygen metabolic process"/>
    <property type="evidence" value="ECO:0007669"/>
    <property type="project" value="Ensembl"/>
</dbReference>
<dbReference type="GO" id="GO:0009404">
    <property type="term" value="P:toxin metabolic process"/>
    <property type="evidence" value="ECO:0007669"/>
    <property type="project" value="Ensembl"/>
</dbReference>
<dbReference type="GO" id="GO:0006805">
    <property type="term" value="P:xenobiotic metabolic process"/>
    <property type="evidence" value="ECO:0007669"/>
    <property type="project" value="Ensembl"/>
</dbReference>
<dbReference type="FunFam" id="3.50.50.60:FF:000042">
    <property type="entry name" value="Dimethylaniline monooxygenase [N-oxide-forming]"/>
    <property type="match status" value="1"/>
</dbReference>
<dbReference type="FunFam" id="3.50.50.60:FF:000073">
    <property type="entry name" value="Dimethylaniline monooxygenase [N-oxide-forming]"/>
    <property type="match status" value="1"/>
</dbReference>
<dbReference type="FunFam" id="3.50.50.60:FF:000409">
    <property type="entry name" value="Dimethylaniline monooxygenase [N-oxide-forming]"/>
    <property type="match status" value="1"/>
</dbReference>
<dbReference type="Gene3D" id="3.50.50.60">
    <property type="entry name" value="FAD/NAD(P)-binding domain"/>
    <property type="match status" value="2"/>
</dbReference>
<dbReference type="InterPro" id="IPR036188">
    <property type="entry name" value="FAD/NAD-bd_sf"/>
</dbReference>
<dbReference type="InterPro" id="IPR000960">
    <property type="entry name" value="Flavin_mOase"/>
</dbReference>
<dbReference type="InterPro" id="IPR020946">
    <property type="entry name" value="Flavin_mOase-like"/>
</dbReference>
<dbReference type="InterPro" id="IPR002254">
    <property type="entry name" value="Flavin_mOase_2"/>
</dbReference>
<dbReference type="InterPro" id="IPR050346">
    <property type="entry name" value="FMO-like"/>
</dbReference>
<dbReference type="PANTHER" id="PTHR23023">
    <property type="entry name" value="DIMETHYLANILINE MONOOXYGENASE"/>
    <property type="match status" value="1"/>
</dbReference>
<dbReference type="Pfam" id="PF00743">
    <property type="entry name" value="FMO-like"/>
    <property type="match status" value="1"/>
</dbReference>
<dbReference type="PIRSF" id="PIRSF000332">
    <property type="entry name" value="FMO"/>
    <property type="match status" value="1"/>
</dbReference>
<dbReference type="PRINTS" id="PR00370">
    <property type="entry name" value="FMOXYGENASE"/>
</dbReference>
<dbReference type="PRINTS" id="PR01122">
    <property type="entry name" value="FMOXYGENASE2"/>
</dbReference>
<dbReference type="SUPFAM" id="SSF51905">
    <property type="entry name" value="FAD/NAD(P)-binding domain"/>
    <property type="match status" value="2"/>
</dbReference>
<reference key="1">
    <citation type="submission" date="2002-07" db="EMBL/GenBank/DDBJ databases">
        <title>Sequencing of exon 1-8 of pulmonary flavin-containing monooxygenase (FMO2) from chimpanzee.</title>
        <authorList>
            <person name="Furnes B."/>
            <person name="Sommer S."/>
            <person name="Feng J."/>
            <person name="Schlenk D."/>
        </authorList>
    </citation>
    <scope>NUCLEOTIDE SEQUENCE [GENOMIC DNA]</scope>
</reference>
<comment type="function">
    <text evidence="3">Catalyzes the oxidative metabolism of numerous xenobiotics, including mainly therapeutic drugs and insecticides that contain a soft nucleophile, most commonly nitrogen and sulfur and participates to their bioactivation.</text>
</comment>
<comment type="cofactor">
    <cofactor evidence="1">
        <name>FAD</name>
        <dbReference type="ChEBI" id="CHEBI:57692"/>
    </cofactor>
</comment>
<comment type="cofactor">
    <cofactor evidence="1">
        <name>Mg(2+)</name>
        <dbReference type="ChEBI" id="CHEBI:18420"/>
    </cofactor>
</comment>
<comment type="subcellular location">
    <subcellularLocation>
        <location evidence="2">Microsome membrane</location>
        <topology evidence="2">Single-pass membrane protein</topology>
    </subcellularLocation>
    <subcellularLocation>
        <location evidence="2">Endoplasmic reticulum membrane</location>
        <topology evidence="2">Single-pass membrane protein</topology>
    </subcellularLocation>
</comment>
<comment type="similarity">
    <text evidence="6">Belongs to the FMO family.</text>
</comment>
<organism>
    <name type="scientific">Pan troglodytes</name>
    <name type="common">Chimpanzee</name>
    <dbReference type="NCBI Taxonomy" id="9598"/>
    <lineage>
        <taxon>Eukaryota</taxon>
        <taxon>Metazoa</taxon>
        <taxon>Chordata</taxon>
        <taxon>Craniata</taxon>
        <taxon>Vertebrata</taxon>
        <taxon>Euteleostomi</taxon>
        <taxon>Mammalia</taxon>
        <taxon>Eutheria</taxon>
        <taxon>Euarchontoglires</taxon>
        <taxon>Primates</taxon>
        <taxon>Haplorrhini</taxon>
        <taxon>Catarrhini</taxon>
        <taxon>Hominidae</taxon>
        <taxon>Pan</taxon>
    </lineage>
</organism>
<proteinExistence type="inferred from homology"/>